<proteinExistence type="evidence at protein level"/>
<feature type="chain" id="PRO_0000066561" description="Zinc finger BED domain-containing protein 2">
    <location>
        <begin position="1"/>
        <end position="218"/>
    </location>
</feature>
<feature type="zinc finger region" description="BED-type" evidence="1">
    <location>
        <begin position="52"/>
        <end position="113"/>
    </location>
</feature>
<feature type="region of interest" description="Disordered" evidence="2">
    <location>
        <begin position="1"/>
        <end position="24"/>
    </location>
</feature>
<feature type="region of interest" description="Disordered" evidence="2">
    <location>
        <begin position="104"/>
        <end position="137"/>
    </location>
</feature>
<feature type="compositionally biased region" description="Acidic residues" evidence="2">
    <location>
        <begin position="1"/>
        <end position="11"/>
    </location>
</feature>
<feature type="compositionally biased region" description="Basic and acidic residues" evidence="2">
    <location>
        <begin position="105"/>
        <end position="114"/>
    </location>
</feature>
<feature type="binding site" evidence="1">
    <location>
        <position position="78"/>
    </location>
    <ligand>
        <name>Zn(2+)</name>
        <dbReference type="ChEBI" id="CHEBI:29105"/>
    </ligand>
</feature>
<feature type="binding site" evidence="1">
    <location>
        <position position="81"/>
    </location>
    <ligand>
        <name>Zn(2+)</name>
        <dbReference type="ChEBI" id="CHEBI:29105"/>
    </ligand>
</feature>
<feature type="binding site" evidence="1">
    <location>
        <position position="101"/>
    </location>
    <ligand>
        <name>Zn(2+)</name>
        <dbReference type="ChEBI" id="CHEBI:29105"/>
    </ligand>
</feature>
<feature type="binding site" evidence="1">
    <location>
        <position position="106"/>
    </location>
    <ligand>
        <name>Zn(2+)</name>
        <dbReference type="ChEBI" id="CHEBI:29105"/>
    </ligand>
</feature>
<feature type="sequence variant" id="VAR_083712" evidence="4">
    <location>
        <position position="2"/>
    </location>
</feature>
<feature type="helix" evidence="8">
    <location>
        <begin position="55"/>
        <end position="60"/>
    </location>
</feature>
<feature type="strand" evidence="8">
    <location>
        <begin position="61"/>
        <end position="63"/>
    </location>
</feature>
<feature type="strand" evidence="8">
    <location>
        <begin position="68"/>
        <end position="70"/>
    </location>
</feature>
<feature type="strand" evidence="8">
    <location>
        <begin position="76"/>
        <end position="81"/>
    </location>
</feature>
<feature type="strand" evidence="8">
    <location>
        <begin position="93"/>
        <end position="95"/>
    </location>
</feature>
<feature type="helix" evidence="8">
    <location>
        <begin position="97"/>
        <end position="104"/>
    </location>
</feature>
<feature type="helix" evidence="8">
    <location>
        <begin position="107"/>
        <end position="112"/>
    </location>
</feature>
<gene>
    <name type="primary">ZBED2</name>
</gene>
<dbReference type="EMBL" id="AC055748">
    <property type="status" value="NOT_ANNOTATED_CDS"/>
    <property type="molecule type" value="Genomic_DNA"/>
</dbReference>
<dbReference type="EMBL" id="CH471052">
    <property type="protein sequence ID" value="EAW79699.1"/>
    <property type="molecule type" value="Genomic_DNA"/>
</dbReference>
<dbReference type="EMBL" id="CH471052">
    <property type="protein sequence ID" value="EAW79700.1"/>
    <property type="molecule type" value="Genomic_DNA"/>
</dbReference>
<dbReference type="EMBL" id="BC003536">
    <property type="protein sequence ID" value="AAH03536.1"/>
    <property type="status" value="ALT_INIT"/>
    <property type="molecule type" value="mRNA"/>
</dbReference>
<dbReference type="EMBL" id="BC071956">
    <property type="protein sequence ID" value="AAH71956.1"/>
    <property type="status" value="ALT_INIT"/>
    <property type="molecule type" value="mRNA"/>
</dbReference>
<dbReference type="CCDS" id="CCDS2960.2"/>
<dbReference type="RefSeq" id="NP_078784.2">
    <property type="nucleotide sequence ID" value="NM_024508.5"/>
</dbReference>
<dbReference type="PDB" id="2DJR">
    <property type="method" value="NMR"/>
    <property type="chains" value="A=55-117"/>
</dbReference>
<dbReference type="PDBsum" id="2DJR"/>
<dbReference type="SMR" id="Q9BTP6"/>
<dbReference type="BioGRID" id="122663">
    <property type="interactions" value="5"/>
</dbReference>
<dbReference type="FunCoup" id="Q9BTP6">
    <property type="interactions" value="31"/>
</dbReference>
<dbReference type="IntAct" id="Q9BTP6">
    <property type="interactions" value="4"/>
</dbReference>
<dbReference type="MINT" id="Q9BTP6"/>
<dbReference type="STRING" id="9606.ENSP00000321370"/>
<dbReference type="iPTMnet" id="Q9BTP6"/>
<dbReference type="PhosphoSitePlus" id="Q9BTP6"/>
<dbReference type="BioMuta" id="ZBED2"/>
<dbReference type="DMDM" id="251757414"/>
<dbReference type="MassIVE" id="Q9BTP6"/>
<dbReference type="PaxDb" id="9606-ENSP00000321370"/>
<dbReference type="PeptideAtlas" id="Q9BTP6"/>
<dbReference type="ProteomicsDB" id="79003"/>
<dbReference type="Antibodypedia" id="32442">
    <property type="antibodies" value="56 antibodies from 20 providers"/>
</dbReference>
<dbReference type="DNASU" id="79413"/>
<dbReference type="Ensembl" id="ENST00000317012.5">
    <property type="protein sequence ID" value="ENSP00000321370.4"/>
    <property type="gene ID" value="ENSG00000177494.6"/>
</dbReference>
<dbReference type="GeneID" id="79413"/>
<dbReference type="KEGG" id="hsa:79413"/>
<dbReference type="MANE-Select" id="ENST00000317012.5">
    <property type="protein sequence ID" value="ENSP00000321370.4"/>
    <property type="RefSeq nucleotide sequence ID" value="NM_024508.5"/>
    <property type="RefSeq protein sequence ID" value="NP_078784.2"/>
</dbReference>
<dbReference type="UCSC" id="uc003dxy.4">
    <property type="organism name" value="human"/>
</dbReference>
<dbReference type="AGR" id="HGNC:20710"/>
<dbReference type="CTD" id="79413"/>
<dbReference type="DisGeNET" id="79413"/>
<dbReference type="GeneCards" id="ZBED2"/>
<dbReference type="HGNC" id="HGNC:20710">
    <property type="gene designation" value="ZBED2"/>
</dbReference>
<dbReference type="HPA" id="ENSG00000177494">
    <property type="expression patterns" value="Tissue enhanced (lymphoid tissue, thyroid gland)"/>
</dbReference>
<dbReference type="MIM" id="615246">
    <property type="type" value="gene"/>
</dbReference>
<dbReference type="neXtProt" id="NX_Q9BTP6"/>
<dbReference type="OpenTargets" id="ENSG00000177494"/>
<dbReference type="PharmGKB" id="PA134879520"/>
<dbReference type="VEuPathDB" id="HostDB:ENSG00000177494"/>
<dbReference type="eggNOG" id="ENOG502SQ4N">
    <property type="taxonomic scope" value="Eukaryota"/>
</dbReference>
<dbReference type="GeneTree" id="ENSGT00940000163343"/>
<dbReference type="HOGENOM" id="CLU_112726_0_0_1"/>
<dbReference type="InParanoid" id="Q9BTP6"/>
<dbReference type="OMA" id="GHHPNQY"/>
<dbReference type="OrthoDB" id="9449303at2759"/>
<dbReference type="PAN-GO" id="Q9BTP6">
    <property type="GO annotations" value="2 GO annotations based on evolutionary models"/>
</dbReference>
<dbReference type="PhylomeDB" id="Q9BTP6"/>
<dbReference type="TreeFam" id="TF338048"/>
<dbReference type="PathwayCommons" id="Q9BTP6"/>
<dbReference type="SignaLink" id="Q9BTP6"/>
<dbReference type="BioGRID-ORCS" id="79413">
    <property type="hits" value="32 hits in 1172 CRISPR screens"/>
</dbReference>
<dbReference type="EvolutionaryTrace" id="Q9BTP6"/>
<dbReference type="GenomeRNAi" id="79413"/>
<dbReference type="Pharos" id="Q9BTP6">
    <property type="development level" value="Tdark"/>
</dbReference>
<dbReference type="PRO" id="PR:Q9BTP6"/>
<dbReference type="Proteomes" id="UP000005640">
    <property type="component" value="Chromosome 3"/>
</dbReference>
<dbReference type="RNAct" id="Q9BTP6">
    <property type="molecule type" value="protein"/>
</dbReference>
<dbReference type="Bgee" id="ENSG00000177494">
    <property type="expression patterns" value="Expressed in tongue squamous epithelium and 93 other cell types or tissues"/>
</dbReference>
<dbReference type="GO" id="GO:0000785">
    <property type="term" value="C:chromatin"/>
    <property type="evidence" value="ECO:0000247"/>
    <property type="project" value="NTNU_SB"/>
</dbReference>
<dbReference type="GO" id="GO:0005634">
    <property type="term" value="C:nucleus"/>
    <property type="evidence" value="ECO:0000305"/>
    <property type="project" value="UniProtKB"/>
</dbReference>
<dbReference type="GO" id="GO:0000981">
    <property type="term" value="F:DNA-binding transcription factor activity, RNA polymerase II-specific"/>
    <property type="evidence" value="ECO:0000247"/>
    <property type="project" value="NTNU_SB"/>
</dbReference>
<dbReference type="GO" id="GO:0001227">
    <property type="term" value="F:DNA-binding transcription repressor activity, RNA polymerase II-specific"/>
    <property type="evidence" value="ECO:0000314"/>
    <property type="project" value="ARUK-UCL"/>
</dbReference>
<dbReference type="GO" id="GO:0000977">
    <property type="term" value="F:RNA polymerase II transcription regulatory region sequence-specific DNA binding"/>
    <property type="evidence" value="ECO:0000314"/>
    <property type="project" value="ARUK-UCL"/>
</dbReference>
<dbReference type="GO" id="GO:0000976">
    <property type="term" value="F:transcription cis-regulatory region binding"/>
    <property type="evidence" value="ECO:0000314"/>
    <property type="project" value="UniProtKB"/>
</dbReference>
<dbReference type="GO" id="GO:0008270">
    <property type="term" value="F:zinc ion binding"/>
    <property type="evidence" value="ECO:0007669"/>
    <property type="project" value="UniProtKB-KW"/>
</dbReference>
<dbReference type="GO" id="GO:0000122">
    <property type="term" value="P:negative regulation of transcription by RNA polymerase II"/>
    <property type="evidence" value="ECO:0000315"/>
    <property type="project" value="UniProtKB"/>
</dbReference>
<dbReference type="GO" id="GO:0045618">
    <property type="term" value="P:positive regulation of keratinocyte differentiation"/>
    <property type="evidence" value="ECO:0000315"/>
    <property type="project" value="HGNC"/>
</dbReference>
<dbReference type="InterPro" id="IPR043471">
    <property type="entry name" value="ZBED2/3"/>
</dbReference>
<dbReference type="InterPro" id="IPR003656">
    <property type="entry name" value="Znf_BED"/>
</dbReference>
<dbReference type="InterPro" id="IPR036236">
    <property type="entry name" value="Znf_C2H2_sf"/>
</dbReference>
<dbReference type="PANTHER" id="PTHR35827:SF1">
    <property type="entry name" value="ZINC FINGER BED DOMAIN-CONTAINING PROTEIN 2"/>
    <property type="match status" value="1"/>
</dbReference>
<dbReference type="PANTHER" id="PTHR35827">
    <property type="entry name" value="ZINC FINGER BED DOMAIN-CONTAINING PROTEIN 3"/>
    <property type="match status" value="1"/>
</dbReference>
<dbReference type="Pfam" id="PF02892">
    <property type="entry name" value="zf-BED"/>
    <property type="match status" value="1"/>
</dbReference>
<dbReference type="SMART" id="SM00614">
    <property type="entry name" value="ZnF_BED"/>
    <property type="match status" value="1"/>
</dbReference>
<dbReference type="SUPFAM" id="SSF57667">
    <property type="entry name" value="beta-beta-alpha zinc fingers"/>
    <property type="match status" value="1"/>
</dbReference>
<dbReference type="PROSITE" id="PS50808">
    <property type="entry name" value="ZF_BED"/>
    <property type="match status" value="1"/>
</dbReference>
<name>ZBED2_HUMAN</name>
<comment type="function">
    <text evidence="3 5">Transcriptional regulator which has intrinsic repressor activity and which competes with the transcriptional activator IRF1 for binding to the 5'-[CA]GAA[AC]C[CT]-3' consensus sequence in gene promoters (PubMed:32385160). May thereby play a role in keratinocyte differentiation (PubMed:31552090).</text>
</comment>
<comment type="subcellular location">
    <subcellularLocation>
        <location evidence="7">Nucleus</location>
    </subcellularLocation>
</comment>
<comment type="tissue specificity">
    <text evidence="3">Expressed in keratinocytes.</text>
</comment>
<comment type="induction">
    <text evidence="5">Induced by TGF-beta.</text>
</comment>
<comment type="sequence caution" evidence="6">
    <conflict type="erroneous initiation">
        <sequence resource="EMBL-CDS" id="AAH03536"/>
    </conflict>
</comment>
<comment type="sequence caution" evidence="6">
    <conflict type="erroneous initiation">
        <sequence resource="EMBL-CDS" id="AAH71956"/>
    </conflict>
</comment>
<sequence>MMRREDEEEEGTMMKAKGDLEMKEEEEISETGELVGPFVSAMPTPMPHNKGTRFSEAWEYFHLAPARAGHHPNQYATCRLCGRQVSRGPGVNVGTTALWKHLKSMHREELEKSGHGQAGQRQDPRPHGPQLPTGIEGNWGRLLEQVGTMALWASQREKEVLRRERAVEWRERAVEKRERALEEVERAILEMKWKVRAEKEACQREKELPAAVHPFHFV</sequence>
<keyword id="KW-0002">3D-structure</keyword>
<keyword id="KW-0238">DNA-binding</keyword>
<keyword id="KW-0479">Metal-binding</keyword>
<keyword id="KW-0539">Nucleus</keyword>
<keyword id="KW-1267">Proteomics identification</keyword>
<keyword id="KW-1185">Reference proteome</keyword>
<keyword id="KW-0678">Repressor</keyword>
<keyword id="KW-0804">Transcription</keyword>
<keyword id="KW-0805">Transcription regulation</keyword>
<keyword id="KW-0862">Zinc</keyword>
<keyword id="KW-0863">Zinc-finger</keyword>
<reference key="1">
    <citation type="journal article" date="2006" name="Nature">
        <title>The DNA sequence, annotation and analysis of human chromosome 3.</title>
        <authorList>
            <person name="Muzny D.M."/>
            <person name="Scherer S.E."/>
            <person name="Kaul R."/>
            <person name="Wang J."/>
            <person name="Yu J."/>
            <person name="Sudbrak R."/>
            <person name="Buhay C.J."/>
            <person name="Chen R."/>
            <person name="Cree A."/>
            <person name="Ding Y."/>
            <person name="Dugan-Rocha S."/>
            <person name="Gill R."/>
            <person name="Gunaratne P."/>
            <person name="Harris R.A."/>
            <person name="Hawes A.C."/>
            <person name="Hernandez J."/>
            <person name="Hodgson A.V."/>
            <person name="Hume J."/>
            <person name="Jackson A."/>
            <person name="Khan Z.M."/>
            <person name="Kovar-Smith C."/>
            <person name="Lewis L.R."/>
            <person name="Lozado R.J."/>
            <person name="Metzker M.L."/>
            <person name="Milosavljevic A."/>
            <person name="Miner G.R."/>
            <person name="Morgan M.B."/>
            <person name="Nazareth L.V."/>
            <person name="Scott G."/>
            <person name="Sodergren E."/>
            <person name="Song X.-Z."/>
            <person name="Steffen D."/>
            <person name="Wei S."/>
            <person name="Wheeler D.A."/>
            <person name="Wright M.W."/>
            <person name="Worley K.C."/>
            <person name="Yuan Y."/>
            <person name="Zhang Z."/>
            <person name="Adams C.Q."/>
            <person name="Ansari-Lari M.A."/>
            <person name="Ayele M."/>
            <person name="Brown M.J."/>
            <person name="Chen G."/>
            <person name="Chen Z."/>
            <person name="Clendenning J."/>
            <person name="Clerc-Blankenburg K.P."/>
            <person name="Chen R."/>
            <person name="Chen Z."/>
            <person name="Davis C."/>
            <person name="Delgado O."/>
            <person name="Dinh H.H."/>
            <person name="Dong W."/>
            <person name="Draper H."/>
            <person name="Ernst S."/>
            <person name="Fu G."/>
            <person name="Gonzalez-Garay M.L."/>
            <person name="Garcia D.K."/>
            <person name="Gillett W."/>
            <person name="Gu J."/>
            <person name="Hao B."/>
            <person name="Haugen E."/>
            <person name="Havlak P."/>
            <person name="He X."/>
            <person name="Hennig S."/>
            <person name="Hu S."/>
            <person name="Huang W."/>
            <person name="Jackson L.R."/>
            <person name="Jacob L.S."/>
            <person name="Kelly S.H."/>
            <person name="Kube M."/>
            <person name="Levy R."/>
            <person name="Li Z."/>
            <person name="Liu B."/>
            <person name="Liu J."/>
            <person name="Liu W."/>
            <person name="Lu J."/>
            <person name="Maheshwari M."/>
            <person name="Nguyen B.-V."/>
            <person name="Okwuonu G.O."/>
            <person name="Palmeiri A."/>
            <person name="Pasternak S."/>
            <person name="Perez L.M."/>
            <person name="Phelps K.A."/>
            <person name="Plopper F.J."/>
            <person name="Qiang B."/>
            <person name="Raymond C."/>
            <person name="Rodriguez R."/>
            <person name="Saenphimmachak C."/>
            <person name="Santibanez J."/>
            <person name="Shen H."/>
            <person name="Shen Y."/>
            <person name="Subramanian S."/>
            <person name="Tabor P.E."/>
            <person name="Verduzco D."/>
            <person name="Waldron L."/>
            <person name="Wang J."/>
            <person name="Wang J."/>
            <person name="Wang Q."/>
            <person name="Williams G.A."/>
            <person name="Wong G.K.-S."/>
            <person name="Yao Z."/>
            <person name="Zhang J."/>
            <person name="Zhang X."/>
            <person name="Zhao G."/>
            <person name="Zhou J."/>
            <person name="Zhou Y."/>
            <person name="Nelson D."/>
            <person name="Lehrach H."/>
            <person name="Reinhardt R."/>
            <person name="Naylor S.L."/>
            <person name="Yang H."/>
            <person name="Olson M."/>
            <person name="Weinstock G."/>
            <person name="Gibbs R.A."/>
        </authorList>
    </citation>
    <scope>NUCLEOTIDE SEQUENCE [LARGE SCALE GENOMIC DNA]</scope>
</reference>
<reference key="2">
    <citation type="submission" date="2005-09" db="EMBL/GenBank/DDBJ databases">
        <authorList>
            <person name="Mural R.J."/>
            <person name="Istrail S."/>
            <person name="Sutton G.G."/>
            <person name="Florea L."/>
            <person name="Halpern A.L."/>
            <person name="Mobarry C.M."/>
            <person name="Lippert R."/>
            <person name="Walenz B."/>
            <person name="Shatkay H."/>
            <person name="Dew I."/>
            <person name="Miller J.R."/>
            <person name="Flanigan M.J."/>
            <person name="Edwards N.J."/>
            <person name="Bolanos R."/>
            <person name="Fasulo D."/>
            <person name="Halldorsson B.V."/>
            <person name="Hannenhalli S."/>
            <person name="Turner R."/>
            <person name="Yooseph S."/>
            <person name="Lu F."/>
            <person name="Nusskern D.R."/>
            <person name="Shue B.C."/>
            <person name="Zheng X.H."/>
            <person name="Zhong F."/>
            <person name="Delcher A.L."/>
            <person name="Huson D.H."/>
            <person name="Kravitz S.A."/>
            <person name="Mouchard L."/>
            <person name="Reinert K."/>
            <person name="Remington K.A."/>
            <person name="Clark A.G."/>
            <person name="Waterman M.S."/>
            <person name="Eichler E.E."/>
            <person name="Adams M.D."/>
            <person name="Hunkapiller M.W."/>
            <person name="Myers E.W."/>
            <person name="Venter J.C."/>
        </authorList>
    </citation>
    <scope>NUCLEOTIDE SEQUENCE [LARGE SCALE GENOMIC DNA]</scope>
</reference>
<reference key="3">
    <citation type="journal article" date="2004" name="Genome Res.">
        <title>The status, quality, and expansion of the NIH full-length cDNA project: the Mammalian Gene Collection (MGC).</title>
        <authorList>
            <consortium name="The MGC Project Team"/>
        </authorList>
    </citation>
    <scope>NUCLEOTIDE SEQUENCE [LARGE SCALE MRNA]</scope>
    <source>
        <tissue>Ovary</tissue>
        <tissue>Uterus</tissue>
    </source>
</reference>
<reference key="4">
    <citation type="journal article" date="2019" name="Front. Genet.">
        <title>Single-Cell Transcriptomics Reveals Spatial and Temporal Turnover of Keratinocyte Differentiation Regulators.</title>
        <authorList>
            <person name="Finnegan A."/>
            <person name="Cho R.J."/>
            <person name="Luu A."/>
            <person name="Harirchian P."/>
            <person name="Lee J."/>
            <person name="Cheng J.B."/>
            <person name="Song J.S."/>
        </authorList>
    </citation>
    <scope>FUNCTION</scope>
    <scope>TISSUE SPECIFICITY</scope>
</reference>
<reference key="5">
    <citation type="journal article" date="2020" name="Proc. Natl. Acad. Sci. U.S.A.">
        <title>ZBED2 is an antagonist of interferon regulatory factor 1 and modifies cell identity in pancreatic cancer.</title>
        <authorList>
            <person name="Somerville T.D.D."/>
            <person name="Xu Y."/>
            <person name="Wu X.S."/>
            <person name="Maia-Silva D."/>
            <person name="Hur S.K."/>
            <person name="de Almeida L.M.N."/>
            <person name="Preall J.B."/>
            <person name="Koo P.K."/>
            <person name="Vakoc C.R."/>
        </authorList>
    </citation>
    <scope>FUNCTION</scope>
    <scope>INDUCTION BY TGF-BETA</scope>
</reference>
<reference key="6">
    <citation type="submission" date="2006-10" db="PDB data bank">
        <title>Solution structures of the C2H2 type zinc finger domain of human zinc finger BED domain containing protein 2.</title>
        <authorList>
            <consortium name="RIKEN structural genomics initiative (RSGI)"/>
        </authorList>
    </citation>
    <scope>STRUCTURE BY NMR OF 55-117</scope>
</reference>
<reference key="7">
    <citation type="journal article" date="2020" name="Arch. Iran. Med.">
        <title>Limbic System Associated Membrane Protein Mutation in an Iranian Family Diagnosed with Meniere's Disease.</title>
        <authorList>
            <person name="Mehrjoo Z."/>
            <person name="Kahrizi K."/>
            <person name="Mohseni M."/>
            <person name="Akbari M."/>
            <person name="Arzhangi S."/>
            <person name="Jalalvand K."/>
            <person name="Najmabadi H."/>
            <person name="Farhadi M."/>
            <person name="Mohseni M."/>
            <person name="Asghari A."/>
            <person name="Mohebbi S."/>
            <person name="Daneshi A."/>
        </authorList>
    </citation>
    <scope>VARIANT MET-2 DEL</scope>
</reference>
<accession>Q9BTP6</accession>
<accession>D3DN62</accession>
<organism>
    <name type="scientific">Homo sapiens</name>
    <name type="common">Human</name>
    <dbReference type="NCBI Taxonomy" id="9606"/>
    <lineage>
        <taxon>Eukaryota</taxon>
        <taxon>Metazoa</taxon>
        <taxon>Chordata</taxon>
        <taxon>Craniata</taxon>
        <taxon>Vertebrata</taxon>
        <taxon>Euteleostomi</taxon>
        <taxon>Mammalia</taxon>
        <taxon>Eutheria</taxon>
        <taxon>Euarchontoglires</taxon>
        <taxon>Primates</taxon>
        <taxon>Haplorrhini</taxon>
        <taxon>Catarrhini</taxon>
        <taxon>Hominidae</taxon>
        <taxon>Homo</taxon>
    </lineage>
</organism>
<evidence type="ECO:0000255" key="1">
    <source>
        <dbReference type="PROSITE-ProRule" id="PRU00027"/>
    </source>
</evidence>
<evidence type="ECO:0000256" key="2">
    <source>
        <dbReference type="SAM" id="MobiDB-lite"/>
    </source>
</evidence>
<evidence type="ECO:0000269" key="3">
    <source>
    </source>
</evidence>
<evidence type="ECO:0000269" key="4">
    <source>
    </source>
</evidence>
<evidence type="ECO:0000269" key="5">
    <source>
    </source>
</evidence>
<evidence type="ECO:0000305" key="6"/>
<evidence type="ECO:0000305" key="7">
    <source>
    </source>
</evidence>
<evidence type="ECO:0007829" key="8">
    <source>
        <dbReference type="PDB" id="2DJR"/>
    </source>
</evidence>
<protein>
    <recommendedName>
        <fullName>Zinc finger BED domain-containing protein 2</fullName>
    </recommendedName>
</protein>